<feature type="chain" id="PRO_0000311113" description="RNA-binding region-containing protein 3">
    <location>
        <begin position="1"/>
        <end position="514"/>
    </location>
</feature>
<feature type="domain" description="RRM 1" evidence="4">
    <location>
        <begin position="27"/>
        <end position="102"/>
    </location>
</feature>
<feature type="domain" description="RRM 2" evidence="4">
    <location>
        <begin position="418"/>
        <end position="501"/>
    </location>
</feature>
<feature type="region of interest" description="Disordered" evidence="5">
    <location>
        <begin position="1"/>
        <end position="26"/>
    </location>
</feature>
<feature type="region of interest" description="Disordered" evidence="5">
    <location>
        <begin position="106"/>
        <end position="133"/>
    </location>
</feature>
<feature type="region of interest" description="Disordered" evidence="5">
    <location>
        <begin position="213"/>
        <end position="282"/>
    </location>
</feature>
<feature type="region of interest" description="Disordered" evidence="5">
    <location>
        <begin position="337"/>
        <end position="363"/>
    </location>
</feature>
<feature type="compositionally biased region" description="Basic and acidic residues" evidence="5">
    <location>
        <begin position="115"/>
        <end position="133"/>
    </location>
</feature>
<feature type="compositionally biased region" description="Pro residues" evidence="5">
    <location>
        <begin position="217"/>
        <end position="230"/>
    </location>
</feature>
<feature type="modified residue" description="Phosphoserine" evidence="3">
    <location>
        <position position="21"/>
    </location>
</feature>
<feature type="modified residue" description="Phosphoserine" evidence="3">
    <location>
        <position position="108"/>
    </location>
</feature>
<feature type="modified residue" description="Phosphoserine" evidence="2">
    <location>
        <position position="349"/>
    </location>
</feature>
<feature type="splice variant" id="VSP_029402" description="In isoform 2." evidence="6">
    <location>
        <position position="497"/>
    </location>
</feature>
<feature type="sequence conflict" description="In Ref. 1; BAE22060." evidence="7" ref="1">
    <original>E</original>
    <variation>K</variation>
    <location>
        <position position="41"/>
    </location>
</feature>
<feature type="sequence conflict" description="In Ref. 1; BAB28770." evidence="7" ref="1">
    <original>M</original>
    <variation>T</variation>
    <location>
        <position position="261"/>
    </location>
</feature>
<feature type="sequence conflict" description="In Ref. 1; BAE22060." evidence="7" ref="1">
    <original>V</original>
    <variation>E</variation>
    <location>
        <position position="422"/>
    </location>
</feature>
<keyword id="KW-0025">Alternative splicing</keyword>
<keyword id="KW-0539">Nucleus</keyword>
<keyword id="KW-0597">Phosphoprotein</keyword>
<keyword id="KW-1185">Reference proteome</keyword>
<keyword id="KW-0677">Repeat</keyword>
<keyword id="KW-0694">RNA-binding</keyword>
<gene>
    <name type="primary">Rnpc3</name>
    <name type="synonym">Kiaa1839</name>
    <name type="synonym">Rbm40</name>
</gene>
<accession>Q3UZ01</accession>
<accession>Q3TTZ2</accession>
<accession>Q69Z94</accession>
<accession>Q80VS9</accession>
<accession>Q91YJ1</accession>
<accession>Q9CSC1</accession>
<evidence type="ECO:0000250" key="1"/>
<evidence type="ECO:0000250" key="2">
    <source>
        <dbReference type="UniProtKB" id="Q4G055"/>
    </source>
</evidence>
<evidence type="ECO:0000250" key="3">
    <source>
        <dbReference type="UniProtKB" id="Q96LT9"/>
    </source>
</evidence>
<evidence type="ECO:0000255" key="4">
    <source>
        <dbReference type="PROSITE-ProRule" id="PRU00176"/>
    </source>
</evidence>
<evidence type="ECO:0000256" key="5">
    <source>
        <dbReference type="SAM" id="MobiDB-lite"/>
    </source>
</evidence>
<evidence type="ECO:0000303" key="6">
    <source>
    </source>
</evidence>
<evidence type="ECO:0000305" key="7"/>
<proteinExistence type="evidence at transcript level"/>
<dbReference type="EMBL" id="AK013288">
    <property type="protein sequence ID" value="BAB28770.3"/>
    <property type="molecule type" value="mRNA"/>
</dbReference>
<dbReference type="EMBL" id="AK134241">
    <property type="protein sequence ID" value="BAE22060.1"/>
    <property type="molecule type" value="mRNA"/>
</dbReference>
<dbReference type="EMBL" id="AK161063">
    <property type="protein sequence ID" value="BAE36180.1"/>
    <property type="molecule type" value="mRNA"/>
</dbReference>
<dbReference type="EMBL" id="BC016603">
    <property type="protein sequence ID" value="AAH16603.1"/>
    <property type="status" value="ALT_INIT"/>
    <property type="molecule type" value="mRNA"/>
</dbReference>
<dbReference type="EMBL" id="BC043695">
    <property type="protein sequence ID" value="AAH43695.1"/>
    <property type="molecule type" value="mRNA"/>
</dbReference>
<dbReference type="EMBL" id="AK173272">
    <property type="protein sequence ID" value="BAD32550.1"/>
    <property type="molecule type" value="mRNA"/>
</dbReference>
<dbReference type="CCDS" id="CCDS17777.1">
    <molecule id="Q3UZ01-1"/>
</dbReference>
<dbReference type="CCDS" id="CCDS71308.1">
    <molecule id="Q3UZ01-2"/>
</dbReference>
<dbReference type="RefSeq" id="NP_001033785.1">
    <molecule id="Q3UZ01-1"/>
    <property type="nucleotide sequence ID" value="NM_001038696.1"/>
</dbReference>
<dbReference type="RefSeq" id="NP_001273944.1">
    <molecule id="Q3UZ01-2"/>
    <property type="nucleotide sequence ID" value="NM_001287015.1"/>
</dbReference>
<dbReference type="RefSeq" id="NP_080319.2">
    <molecule id="Q3UZ01-1"/>
    <property type="nucleotide sequence ID" value="NM_026043.3"/>
</dbReference>
<dbReference type="SMR" id="Q3UZ01"/>
<dbReference type="BioGRID" id="212030">
    <property type="interactions" value="1"/>
</dbReference>
<dbReference type="FunCoup" id="Q3UZ01">
    <property type="interactions" value="2660"/>
</dbReference>
<dbReference type="STRING" id="10090.ENSMUSP00000089792"/>
<dbReference type="iPTMnet" id="Q3UZ01"/>
<dbReference type="PhosphoSitePlus" id="Q3UZ01"/>
<dbReference type="jPOST" id="Q3UZ01"/>
<dbReference type="PaxDb" id="10090-ENSMUSP00000089792"/>
<dbReference type="ProteomicsDB" id="300316">
    <molecule id="Q3UZ01-1"/>
</dbReference>
<dbReference type="ProteomicsDB" id="300317">
    <molecule id="Q3UZ01-2"/>
</dbReference>
<dbReference type="Pumba" id="Q3UZ01"/>
<dbReference type="Antibodypedia" id="9690">
    <property type="antibodies" value="86 antibodies from 23 providers"/>
</dbReference>
<dbReference type="Ensembl" id="ENSMUST00000092154.10">
    <molecule id="Q3UZ01-1"/>
    <property type="protein sequence ID" value="ENSMUSP00000089792.4"/>
    <property type="gene ID" value="ENSMUSG00000027981.15"/>
</dbReference>
<dbReference type="Ensembl" id="ENSMUST00000106535.2">
    <molecule id="Q3UZ01-2"/>
    <property type="protein sequence ID" value="ENSMUSP00000102145.2"/>
    <property type="gene ID" value="ENSMUSG00000027981.15"/>
</dbReference>
<dbReference type="Ensembl" id="ENSMUST00000106536.8">
    <molecule id="Q3UZ01-1"/>
    <property type="protein sequence ID" value="ENSMUSP00000102146.2"/>
    <property type="gene ID" value="ENSMUSG00000027981.15"/>
</dbReference>
<dbReference type="GeneID" id="67225"/>
<dbReference type="KEGG" id="mmu:67225"/>
<dbReference type="UCSC" id="uc008rbd.1">
    <molecule id="Q3UZ01-1"/>
    <property type="organism name" value="mouse"/>
</dbReference>
<dbReference type="UCSC" id="uc008rbf.1">
    <molecule id="Q3UZ01-2"/>
    <property type="organism name" value="mouse"/>
</dbReference>
<dbReference type="AGR" id="MGI:1914475"/>
<dbReference type="CTD" id="55599"/>
<dbReference type="MGI" id="MGI:1914475">
    <property type="gene designation" value="Rnpc3"/>
</dbReference>
<dbReference type="VEuPathDB" id="HostDB:ENSMUSG00000027981"/>
<dbReference type="eggNOG" id="KOG4206">
    <property type="taxonomic scope" value="Eukaryota"/>
</dbReference>
<dbReference type="GeneTree" id="ENSGT00530000063786"/>
<dbReference type="InParanoid" id="Q3UZ01"/>
<dbReference type="OMA" id="AINIRHE"/>
<dbReference type="OrthoDB" id="277802at2759"/>
<dbReference type="PhylomeDB" id="Q3UZ01"/>
<dbReference type="TreeFam" id="TF324298"/>
<dbReference type="Reactome" id="R-MMU-72165">
    <property type="pathway name" value="mRNA Splicing - Minor Pathway"/>
</dbReference>
<dbReference type="BioGRID-ORCS" id="67225">
    <property type="hits" value="18 hits in 75 CRISPR screens"/>
</dbReference>
<dbReference type="ChiTaRS" id="Rnpc3">
    <property type="organism name" value="mouse"/>
</dbReference>
<dbReference type="PRO" id="PR:Q3UZ01"/>
<dbReference type="Proteomes" id="UP000000589">
    <property type="component" value="Chromosome 3"/>
</dbReference>
<dbReference type="RNAct" id="Q3UZ01">
    <property type="molecule type" value="protein"/>
</dbReference>
<dbReference type="Bgee" id="ENSMUSG00000027981">
    <property type="expression patterns" value="Expressed in retinal neural layer and 272 other cell types or tissues"/>
</dbReference>
<dbReference type="ExpressionAtlas" id="Q3UZ01">
    <property type="expression patterns" value="baseline and differential"/>
</dbReference>
<dbReference type="GO" id="GO:0005654">
    <property type="term" value="C:nucleoplasm"/>
    <property type="evidence" value="ECO:0007669"/>
    <property type="project" value="Ensembl"/>
</dbReference>
<dbReference type="GO" id="GO:0005634">
    <property type="term" value="C:nucleus"/>
    <property type="evidence" value="ECO:0000250"/>
    <property type="project" value="MGI"/>
</dbReference>
<dbReference type="GO" id="GO:0005689">
    <property type="term" value="C:U12-type spliceosomal complex"/>
    <property type="evidence" value="ECO:0000250"/>
    <property type="project" value="HGNC"/>
</dbReference>
<dbReference type="GO" id="GO:0003723">
    <property type="term" value="F:RNA binding"/>
    <property type="evidence" value="ECO:0007669"/>
    <property type="project" value="UniProtKB-KW"/>
</dbReference>
<dbReference type="CDD" id="cd12238">
    <property type="entry name" value="RRM1_RBM40_like"/>
    <property type="match status" value="1"/>
</dbReference>
<dbReference type="CDD" id="cd12239">
    <property type="entry name" value="RRM2_RBM40_like"/>
    <property type="match status" value="1"/>
</dbReference>
<dbReference type="FunFam" id="3.30.70.330:FF:000289">
    <property type="entry name" value="RNA-binding protein 40 isoform X1"/>
    <property type="match status" value="1"/>
</dbReference>
<dbReference type="FunFam" id="3.30.70.330:FF:000207">
    <property type="entry name" value="RNA-binding region (RNP1, RRM)-containing 3"/>
    <property type="match status" value="1"/>
</dbReference>
<dbReference type="Gene3D" id="3.30.70.330">
    <property type="match status" value="2"/>
</dbReference>
<dbReference type="Gene3D" id="6.10.250.610">
    <property type="match status" value="1"/>
</dbReference>
<dbReference type="InterPro" id="IPR012677">
    <property type="entry name" value="Nucleotide-bd_a/b_plait_sf"/>
</dbReference>
<dbReference type="InterPro" id="IPR035979">
    <property type="entry name" value="RBD_domain_sf"/>
</dbReference>
<dbReference type="InterPro" id="IPR034147">
    <property type="entry name" value="RBM40_RRM1"/>
</dbReference>
<dbReference type="InterPro" id="IPR045164">
    <property type="entry name" value="RBM41/RNPC3"/>
</dbReference>
<dbReference type="InterPro" id="IPR000504">
    <property type="entry name" value="RRM_dom"/>
</dbReference>
<dbReference type="PANTHER" id="PTHR16105">
    <property type="entry name" value="RNA-BINDING REGION-CONTAINING PROTEIN 3"/>
    <property type="match status" value="1"/>
</dbReference>
<dbReference type="PANTHER" id="PTHR16105:SF0">
    <property type="entry name" value="RNA-BINDING REGION-CONTAINING PROTEIN 3"/>
    <property type="match status" value="1"/>
</dbReference>
<dbReference type="Pfam" id="PF00076">
    <property type="entry name" value="RRM_1"/>
    <property type="match status" value="2"/>
</dbReference>
<dbReference type="SMART" id="SM00360">
    <property type="entry name" value="RRM"/>
    <property type="match status" value="2"/>
</dbReference>
<dbReference type="SUPFAM" id="SSF54928">
    <property type="entry name" value="RNA-binding domain, RBD"/>
    <property type="match status" value="2"/>
</dbReference>
<dbReference type="PROSITE" id="PS50102">
    <property type="entry name" value="RRM"/>
    <property type="match status" value="2"/>
</dbReference>
<name>RNPC3_MOUSE</name>
<organism>
    <name type="scientific">Mus musculus</name>
    <name type="common">Mouse</name>
    <dbReference type="NCBI Taxonomy" id="10090"/>
    <lineage>
        <taxon>Eukaryota</taxon>
        <taxon>Metazoa</taxon>
        <taxon>Chordata</taxon>
        <taxon>Craniata</taxon>
        <taxon>Vertebrata</taxon>
        <taxon>Euteleostomi</taxon>
        <taxon>Mammalia</taxon>
        <taxon>Eutheria</taxon>
        <taxon>Euarchontoglires</taxon>
        <taxon>Glires</taxon>
        <taxon>Rodentia</taxon>
        <taxon>Myomorpha</taxon>
        <taxon>Muroidea</taxon>
        <taxon>Muridae</taxon>
        <taxon>Murinae</taxon>
        <taxon>Mus</taxon>
        <taxon>Mus</taxon>
    </lineage>
</organism>
<comment type="function">
    <text evidence="1">Participates in pre-mRNA U12-dependent splicing, performed by the minor spliceosome which removes U12-type introns. U12-type introns comprises less than 1% of all non-coding sequences. Binds to the 3'-stem-loop of m(7)G-capped U12 snRNA (By similarity).</text>
</comment>
<comment type="subunit">
    <text evidence="1">Component of the U11/U12 snRNPs that are part of the U12-type spliceosome. Found in a complex with m(7)G-capped U12 snRNA. Interacts with PDCD7 (By similarity).</text>
</comment>
<comment type="subcellular location">
    <subcellularLocation>
        <location evidence="1">Nucleus</location>
    </subcellularLocation>
</comment>
<comment type="alternative products">
    <event type="alternative splicing"/>
    <isoform>
        <id>Q3UZ01-1</id>
        <name>1</name>
        <sequence type="displayed"/>
    </isoform>
    <isoform>
        <id>Q3UZ01-2</id>
        <name>2</name>
        <sequence type="described" ref="VSP_029402"/>
    </isoform>
</comment>
<comment type="sequence caution" evidence="7">
    <conflict type="erroneous initiation">
        <sequence resource="EMBL-CDS" id="AAH16603"/>
    </conflict>
</comment>
<protein>
    <recommendedName>
        <fullName>RNA-binding region-containing protein 3</fullName>
    </recommendedName>
    <alternativeName>
        <fullName>RNA-binding motif protein 40</fullName>
        <shortName>RNA-binding protein 40</shortName>
    </alternativeName>
</protein>
<reference key="1">
    <citation type="journal article" date="2005" name="Science">
        <title>The transcriptional landscape of the mammalian genome.</title>
        <authorList>
            <person name="Carninci P."/>
            <person name="Kasukawa T."/>
            <person name="Katayama S."/>
            <person name="Gough J."/>
            <person name="Frith M.C."/>
            <person name="Maeda N."/>
            <person name="Oyama R."/>
            <person name="Ravasi T."/>
            <person name="Lenhard B."/>
            <person name="Wells C."/>
            <person name="Kodzius R."/>
            <person name="Shimokawa K."/>
            <person name="Bajic V.B."/>
            <person name="Brenner S.E."/>
            <person name="Batalov S."/>
            <person name="Forrest A.R."/>
            <person name="Zavolan M."/>
            <person name="Davis M.J."/>
            <person name="Wilming L.G."/>
            <person name="Aidinis V."/>
            <person name="Allen J.E."/>
            <person name="Ambesi-Impiombato A."/>
            <person name="Apweiler R."/>
            <person name="Aturaliya R.N."/>
            <person name="Bailey T.L."/>
            <person name="Bansal M."/>
            <person name="Baxter L."/>
            <person name="Beisel K.W."/>
            <person name="Bersano T."/>
            <person name="Bono H."/>
            <person name="Chalk A.M."/>
            <person name="Chiu K.P."/>
            <person name="Choudhary V."/>
            <person name="Christoffels A."/>
            <person name="Clutterbuck D.R."/>
            <person name="Crowe M.L."/>
            <person name="Dalla E."/>
            <person name="Dalrymple B.P."/>
            <person name="de Bono B."/>
            <person name="Della Gatta G."/>
            <person name="di Bernardo D."/>
            <person name="Down T."/>
            <person name="Engstrom P."/>
            <person name="Fagiolini M."/>
            <person name="Faulkner G."/>
            <person name="Fletcher C.F."/>
            <person name="Fukushima T."/>
            <person name="Furuno M."/>
            <person name="Futaki S."/>
            <person name="Gariboldi M."/>
            <person name="Georgii-Hemming P."/>
            <person name="Gingeras T.R."/>
            <person name="Gojobori T."/>
            <person name="Green R.E."/>
            <person name="Gustincich S."/>
            <person name="Harbers M."/>
            <person name="Hayashi Y."/>
            <person name="Hensch T.K."/>
            <person name="Hirokawa N."/>
            <person name="Hill D."/>
            <person name="Huminiecki L."/>
            <person name="Iacono M."/>
            <person name="Ikeo K."/>
            <person name="Iwama A."/>
            <person name="Ishikawa T."/>
            <person name="Jakt M."/>
            <person name="Kanapin A."/>
            <person name="Katoh M."/>
            <person name="Kawasawa Y."/>
            <person name="Kelso J."/>
            <person name="Kitamura H."/>
            <person name="Kitano H."/>
            <person name="Kollias G."/>
            <person name="Krishnan S.P."/>
            <person name="Kruger A."/>
            <person name="Kummerfeld S.K."/>
            <person name="Kurochkin I.V."/>
            <person name="Lareau L.F."/>
            <person name="Lazarevic D."/>
            <person name="Lipovich L."/>
            <person name="Liu J."/>
            <person name="Liuni S."/>
            <person name="McWilliam S."/>
            <person name="Madan Babu M."/>
            <person name="Madera M."/>
            <person name="Marchionni L."/>
            <person name="Matsuda H."/>
            <person name="Matsuzawa S."/>
            <person name="Miki H."/>
            <person name="Mignone F."/>
            <person name="Miyake S."/>
            <person name="Morris K."/>
            <person name="Mottagui-Tabar S."/>
            <person name="Mulder N."/>
            <person name="Nakano N."/>
            <person name="Nakauchi H."/>
            <person name="Ng P."/>
            <person name="Nilsson R."/>
            <person name="Nishiguchi S."/>
            <person name="Nishikawa S."/>
            <person name="Nori F."/>
            <person name="Ohara O."/>
            <person name="Okazaki Y."/>
            <person name="Orlando V."/>
            <person name="Pang K.C."/>
            <person name="Pavan W.J."/>
            <person name="Pavesi G."/>
            <person name="Pesole G."/>
            <person name="Petrovsky N."/>
            <person name="Piazza S."/>
            <person name="Reed J."/>
            <person name="Reid J.F."/>
            <person name="Ring B.Z."/>
            <person name="Ringwald M."/>
            <person name="Rost B."/>
            <person name="Ruan Y."/>
            <person name="Salzberg S.L."/>
            <person name="Sandelin A."/>
            <person name="Schneider C."/>
            <person name="Schoenbach C."/>
            <person name="Sekiguchi K."/>
            <person name="Semple C.A."/>
            <person name="Seno S."/>
            <person name="Sessa L."/>
            <person name="Sheng Y."/>
            <person name="Shibata Y."/>
            <person name="Shimada H."/>
            <person name="Shimada K."/>
            <person name="Silva D."/>
            <person name="Sinclair B."/>
            <person name="Sperling S."/>
            <person name="Stupka E."/>
            <person name="Sugiura K."/>
            <person name="Sultana R."/>
            <person name="Takenaka Y."/>
            <person name="Taki K."/>
            <person name="Tammoja K."/>
            <person name="Tan S.L."/>
            <person name="Tang S."/>
            <person name="Taylor M.S."/>
            <person name="Tegner J."/>
            <person name="Teichmann S.A."/>
            <person name="Ueda H.R."/>
            <person name="van Nimwegen E."/>
            <person name="Verardo R."/>
            <person name="Wei C.L."/>
            <person name="Yagi K."/>
            <person name="Yamanishi H."/>
            <person name="Zabarovsky E."/>
            <person name="Zhu S."/>
            <person name="Zimmer A."/>
            <person name="Hide W."/>
            <person name="Bult C."/>
            <person name="Grimmond S.M."/>
            <person name="Teasdale R.D."/>
            <person name="Liu E.T."/>
            <person name="Brusic V."/>
            <person name="Quackenbush J."/>
            <person name="Wahlestedt C."/>
            <person name="Mattick J.S."/>
            <person name="Hume D.A."/>
            <person name="Kai C."/>
            <person name="Sasaki D."/>
            <person name="Tomaru Y."/>
            <person name="Fukuda S."/>
            <person name="Kanamori-Katayama M."/>
            <person name="Suzuki M."/>
            <person name="Aoki J."/>
            <person name="Arakawa T."/>
            <person name="Iida J."/>
            <person name="Imamura K."/>
            <person name="Itoh M."/>
            <person name="Kato T."/>
            <person name="Kawaji H."/>
            <person name="Kawagashira N."/>
            <person name="Kawashima T."/>
            <person name="Kojima M."/>
            <person name="Kondo S."/>
            <person name="Konno H."/>
            <person name="Nakano K."/>
            <person name="Ninomiya N."/>
            <person name="Nishio T."/>
            <person name="Okada M."/>
            <person name="Plessy C."/>
            <person name="Shibata K."/>
            <person name="Shiraki T."/>
            <person name="Suzuki S."/>
            <person name="Tagami M."/>
            <person name="Waki K."/>
            <person name="Watahiki A."/>
            <person name="Okamura-Oho Y."/>
            <person name="Suzuki H."/>
            <person name="Kawai J."/>
            <person name="Hayashizaki Y."/>
        </authorList>
    </citation>
    <scope>NUCLEOTIDE SEQUENCE [LARGE SCALE MRNA] (ISOFORMS 1 AND 2)</scope>
    <source>
        <strain>C57BL/6J</strain>
        <tissue>Embryo</tissue>
        <tissue>Skin</tissue>
        <tissue>Thymus</tissue>
    </source>
</reference>
<reference key="2">
    <citation type="journal article" date="2004" name="Genome Res.">
        <title>The status, quality, and expansion of the NIH full-length cDNA project: the Mammalian Gene Collection (MGC).</title>
        <authorList>
            <consortium name="The MGC Project Team"/>
        </authorList>
    </citation>
    <scope>NUCLEOTIDE SEQUENCE [LARGE SCALE MRNA] (ISOFORM 1)</scope>
    <source>
        <strain>Czech II</strain>
        <strain>FVB/N</strain>
        <tissue>Mammary tumor</tissue>
    </source>
</reference>
<reference key="3">
    <citation type="journal article" date="2004" name="DNA Res.">
        <title>Prediction of the coding sequences of mouse homologues of KIAA gene: IV. The complete nucleotide sequences of 500 mouse KIAA-homologous cDNAs identified by screening of terminal sequences of cDNA clones randomly sampled from size-fractionated libraries.</title>
        <authorList>
            <person name="Okazaki N."/>
            <person name="Kikuno R."/>
            <person name="Ohara R."/>
            <person name="Inamoto S."/>
            <person name="Koseki H."/>
            <person name="Hiraoka S."/>
            <person name="Saga Y."/>
            <person name="Seino S."/>
            <person name="Nishimura M."/>
            <person name="Kaisho T."/>
            <person name="Hoshino K."/>
            <person name="Kitamura H."/>
            <person name="Nagase T."/>
            <person name="Ohara O."/>
            <person name="Koga H."/>
        </authorList>
    </citation>
    <scope>NUCLEOTIDE SEQUENCE [LARGE SCALE MRNA] OF 53-514 (ISOFORM 1)</scope>
    <source>
        <tissue>Fetal brain</tissue>
    </source>
</reference>
<sequence length="514" mass="57972">MAGPEPPMPLSRGGPGSASLSPPRGDRTLLVRHLPAELTAEEKEDLLKYFGAQSVRVLSDKGRLKHTAFATFPNEKAAIKALTRLHQLKLLGHTLVVEFAKEQDRVHSPCSTSNTEKKKRLDDTVENDKEKKEPDILTVENGIAPNHGLTFPLNSCLKYMYPPPSSTILANIVNALASVPKFYVQVLHLMNKMNLPTPFGPITARPPMYEDYMPLHAPLPPTSPQPPEEPPLPDEDEDLSSKESEYESSDEEDRQRMNRLMELANLQPKRPKTEKPRHVRKKRKIKDMLNIPSSASHSLHPVLLPSDVFDQPQSVGNKKIEFNISTNMPAAFNKDLETQPNNEEENSDSPDTGLDSNTGFGKIFPKPNLNITEEITEDSDEIPSQFISRKELEKGRISREEMETLSVFRSYEPGEPNCRIYVKNLARHVQEKDLKFIFGRYVDFSSETQRIMFDIRLMKEGRMKGQAFVGLPNEKAAAKALKEANGYVLFGKPMVVQFARSARPKQDSKEGKRK</sequence>